<evidence type="ECO:0000255" key="1">
    <source>
        <dbReference type="HAMAP-Rule" id="MF_00406"/>
    </source>
</evidence>
<keyword id="KW-0963">Cytoplasm</keyword>
<keyword id="KW-0441">Lipid A biosynthesis</keyword>
<keyword id="KW-0444">Lipid biosynthesis</keyword>
<keyword id="KW-0443">Lipid metabolism</keyword>
<keyword id="KW-0456">Lyase</keyword>
<name>FABZ_METS4</name>
<organism>
    <name type="scientific">Methylobacterium sp. (strain 4-46)</name>
    <dbReference type="NCBI Taxonomy" id="426117"/>
    <lineage>
        <taxon>Bacteria</taxon>
        <taxon>Pseudomonadati</taxon>
        <taxon>Pseudomonadota</taxon>
        <taxon>Alphaproteobacteria</taxon>
        <taxon>Hyphomicrobiales</taxon>
        <taxon>Methylobacteriaceae</taxon>
        <taxon>Methylobacterium</taxon>
    </lineage>
</organism>
<comment type="function">
    <text evidence="1">Involved in unsaturated fatty acids biosynthesis. Catalyzes the dehydration of short chain beta-hydroxyacyl-ACPs and long chain saturated and unsaturated beta-hydroxyacyl-ACPs.</text>
</comment>
<comment type="catalytic activity">
    <reaction evidence="1">
        <text>a (3R)-hydroxyacyl-[ACP] = a (2E)-enoyl-[ACP] + H2O</text>
        <dbReference type="Rhea" id="RHEA:13097"/>
        <dbReference type="Rhea" id="RHEA-COMP:9925"/>
        <dbReference type="Rhea" id="RHEA-COMP:9945"/>
        <dbReference type="ChEBI" id="CHEBI:15377"/>
        <dbReference type="ChEBI" id="CHEBI:78784"/>
        <dbReference type="ChEBI" id="CHEBI:78827"/>
        <dbReference type="EC" id="4.2.1.59"/>
    </reaction>
</comment>
<comment type="subcellular location">
    <subcellularLocation>
        <location evidence="1">Cytoplasm</location>
    </subcellularLocation>
</comment>
<comment type="similarity">
    <text evidence="1">Belongs to the thioester dehydratase family. FabZ subfamily.</text>
</comment>
<protein>
    <recommendedName>
        <fullName evidence="1">3-hydroxyacyl-[acyl-carrier-protein] dehydratase FabZ</fullName>
        <ecNumber evidence="1">4.2.1.59</ecNumber>
    </recommendedName>
    <alternativeName>
        <fullName evidence="1">(3R)-hydroxymyristoyl-[acyl-carrier-protein] dehydratase</fullName>
        <shortName evidence="1">(3R)-hydroxymyristoyl-ACP dehydrase</shortName>
    </alternativeName>
    <alternativeName>
        <fullName evidence="1">Beta-hydroxyacyl-ACP dehydratase</fullName>
    </alternativeName>
</protein>
<dbReference type="EC" id="4.2.1.59" evidence="1"/>
<dbReference type="EMBL" id="CP000943">
    <property type="protein sequence ID" value="ACA15203.1"/>
    <property type="molecule type" value="Genomic_DNA"/>
</dbReference>
<dbReference type="RefSeq" id="WP_012330620.1">
    <property type="nucleotide sequence ID" value="NC_010511.1"/>
</dbReference>
<dbReference type="SMR" id="B0UQ04"/>
<dbReference type="STRING" id="426117.M446_0642"/>
<dbReference type="KEGG" id="met:M446_0642"/>
<dbReference type="eggNOG" id="COG0764">
    <property type="taxonomic scope" value="Bacteria"/>
</dbReference>
<dbReference type="HOGENOM" id="CLU_078912_1_2_5"/>
<dbReference type="GO" id="GO:0005737">
    <property type="term" value="C:cytoplasm"/>
    <property type="evidence" value="ECO:0007669"/>
    <property type="project" value="UniProtKB-SubCell"/>
</dbReference>
<dbReference type="GO" id="GO:0016020">
    <property type="term" value="C:membrane"/>
    <property type="evidence" value="ECO:0007669"/>
    <property type="project" value="GOC"/>
</dbReference>
<dbReference type="GO" id="GO:0019171">
    <property type="term" value="F:(3R)-hydroxyacyl-[acyl-carrier-protein] dehydratase activity"/>
    <property type="evidence" value="ECO:0007669"/>
    <property type="project" value="UniProtKB-EC"/>
</dbReference>
<dbReference type="GO" id="GO:0006633">
    <property type="term" value="P:fatty acid biosynthetic process"/>
    <property type="evidence" value="ECO:0007669"/>
    <property type="project" value="UniProtKB-UniRule"/>
</dbReference>
<dbReference type="GO" id="GO:0009245">
    <property type="term" value="P:lipid A biosynthetic process"/>
    <property type="evidence" value="ECO:0007669"/>
    <property type="project" value="UniProtKB-UniRule"/>
</dbReference>
<dbReference type="CDD" id="cd01288">
    <property type="entry name" value="FabZ"/>
    <property type="match status" value="1"/>
</dbReference>
<dbReference type="FunFam" id="3.10.129.10:FF:000001">
    <property type="entry name" value="3-hydroxyacyl-[acyl-carrier-protein] dehydratase FabZ"/>
    <property type="match status" value="1"/>
</dbReference>
<dbReference type="Gene3D" id="3.10.129.10">
    <property type="entry name" value="Hotdog Thioesterase"/>
    <property type="match status" value="1"/>
</dbReference>
<dbReference type="HAMAP" id="MF_00406">
    <property type="entry name" value="FabZ"/>
    <property type="match status" value="1"/>
</dbReference>
<dbReference type="InterPro" id="IPR013114">
    <property type="entry name" value="FabA_FabZ"/>
</dbReference>
<dbReference type="InterPro" id="IPR010084">
    <property type="entry name" value="FabZ"/>
</dbReference>
<dbReference type="InterPro" id="IPR029069">
    <property type="entry name" value="HotDog_dom_sf"/>
</dbReference>
<dbReference type="NCBIfam" id="TIGR01750">
    <property type="entry name" value="fabZ"/>
    <property type="match status" value="1"/>
</dbReference>
<dbReference type="NCBIfam" id="NF000582">
    <property type="entry name" value="PRK00006.1"/>
    <property type="match status" value="1"/>
</dbReference>
<dbReference type="PANTHER" id="PTHR30272">
    <property type="entry name" value="3-HYDROXYACYL-[ACYL-CARRIER-PROTEIN] DEHYDRATASE"/>
    <property type="match status" value="1"/>
</dbReference>
<dbReference type="PANTHER" id="PTHR30272:SF1">
    <property type="entry name" value="3-HYDROXYACYL-[ACYL-CARRIER-PROTEIN] DEHYDRATASE"/>
    <property type="match status" value="1"/>
</dbReference>
<dbReference type="Pfam" id="PF07977">
    <property type="entry name" value="FabA"/>
    <property type="match status" value="1"/>
</dbReference>
<dbReference type="SUPFAM" id="SSF54637">
    <property type="entry name" value="Thioesterase/thiol ester dehydrase-isomerase"/>
    <property type="match status" value="1"/>
</dbReference>
<gene>
    <name evidence="1" type="primary">fabZ</name>
    <name type="ordered locus">M446_0642</name>
</gene>
<proteinExistence type="inferred from homology"/>
<feature type="chain" id="PRO_0000340788" description="3-hydroxyacyl-[acyl-carrier-protein] dehydratase FabZ">
    <location>
        <begin position="1"/>
        <end position="165"/>
    </location>
</feature>
<feature type="active site" evidence="1">
    <location>
        <position position="68"/>
    </location>
</feature>
<sequence length="165" mass="18393">MEPDAKSPTPGTTETPRELATADILRVMELLPHRYPFLLVDRIVEIDGDSSCIGIKNVTINEPQFTGHFPKVPVFPGVLLVEGMAQTAGAICCAHTLTRDTRPSRVYLMTIDKVKFRKPVVPGDTVEYHMRKLTNRRTMWWFRGEAKVAGTLVAEAEIGAMLVTE</sequence>
<reference key="1">
    <citation type="submission" date="2008-02" db="EMBL/GenBank/DDBJ databases">
        <title>Complete sequence of chromosome of Methylobacterium sp. 4-46.</title>
        <authorList>
            <consortium name="US DOE Joint Genome Institute"/>
            <person name="Copeland A."/>
            <person name="Lucas S."/>
            <person name="Lapidus A."/>
            <person name="Glavina del Rio T."/>
            <person name="Dalin E."/>
            <person name="Tice H."/>
            <person name="Bruce D."/>
            <person name="Goodwin L."/>
            <person name="Pitluck S."/>
            <person name="Chertkov O."/>
            <person name="Brettin T."/>
            <person name="Detter J.C."/>
            <person name="Han C."/>
            <person name="Kuske C.R."/>
            <person name="Schmutz J."/>
            <person name="Larimer F."/>
            <person name="Land M."/>
            <person name="Hauser L."/>
            <person name="Kyrpides N."/>
            <person name="Ivanova N."/>
            <person name="Marx C.J."/>
            <person name="Richardson P."/>
        </authorList>
    </citation>
    <scope>NUCLEOTIDE SEQUENCE [LARGE SCALE GENOMIC DNA]</scope>
    <source>
        <strain>4-46</strain>
    </source>
</reference>
<accession>B0UQ04</accession>